<comment type="function">
    <text evidence="1">DNA-dependent RNA polymerase catalyzes the transcription of DNA into RNA using the four ribonucleoside triphosphates as substrates.</text>
</comment>
<comment type="catalytic activity">
    <reaction evidence="1">
        <text>RNA(n) + a ribonucleoside 5'-triphosphate = RNA(n+1) + diphosphate</text>
        <dbReference type="Rhea" id="RHEA:21248"/>
        <dbReference type="Rhea" id="RHEA-COMP:14527"/>
        <dbReference type="Rhea" id="RHEA-COMP:17342"/>
        <dbReference type="ChEBI" id="CHEBI:33019"/>
        <dbReference type="ChEBI" id="CHEBI:61557"/>
        <dbReference type="ChEBI" id="CHEBI:140395"/>
        <dbReference type="EC" id="2.7.7.6"/>
    </reaction>
</comment>
<comment type="subunit">
    <text evidence="1">The RNAP catalytic core consists of 2 alpha, 1 beta, 1 beta' and 1 omega subunit. When a sigma factor is associated with the core the holoenzyme is formed, which can initiate transcription.</text>
</comment>
<comment type="similarity">
    <text evidence="1">Belongs to the RNA polymerase beta chain family.</text>
</comment>
<evidence type="ECO:0000255" key="1">
    <source>
        <dbReference type="HAMAP-Rule" id="MF_01321"/>
    </source>
</evidence>
<evidence type="ECO:0000256" key="2">
    <source>
        <dbReference type="SAM" id="MobiDB-lite"/>
    </source>
</evidence>
<protein>
    <recommendedName>
        <fullName evidence="1">DNA-directed RNA polymerase subunit beta</fullName>
        <shortName evidence="1">RNAP subunit beta</shortName>
        <ecNumber evidence="1">2.7.7.6</ecNumber>
    </recommendedName>
    <alternativeName>
        <fullName evidence="1">RNA polymerase subunit beta</fullName>
    </alternativeName>
    <alternativeName>
        <fullName evidence="1">Transcriptase subunit beta</fullName>
    </alternativeName>
</protein>
<dbReference type="EC" id="2.7.7.6" evidence="1"/>
<dbReference type="EMBL" id="CP000721">
    <property type="protein sequence ID" value="ABR32334.1"/>
    <property type="molecule type" value="Genomic_DNA"/>
</dbReference>
<dbReference type="RefSeq" id="WP_011967506.1">
    <property type="nucleotide sequence ID" value="NC_009617.1"/>
</dbReference>
<dbReference type="SMR" id="A6LPQ4"/>
<dbReference type="KEGG" id="cbe:Cbei_0144"/>
<dbReference type="eggNOG" id="COG0085">
    <property type="taxonomic scope" value="Bacteria"/>
</dbReference>
<dbReference type="HOGENOM" id="CLU_000524_4_1_9"/>
<dbReference type="Proteomes" id="UP000000565">
    <property type="component" value="Chromosome"/>
</dbReference>
<dbReference type="GO" id="GO:0000428">
    <property type="term" value="C:DNA-directed RNA polymerase complex"/>
    <property type="evidence" value="ECO:0007669"/>
    <property type="project" value="UniProtKB-KW"/>
</dbReference>
<dbReference type="GO" id="GO:0003677">
    <property type="term" value="F:DNA binding"/>
    <property type="evidence" value="ECO:0007669"/>
    <property type="project" value="UniProtKB-UniRule"/>
</dbReference>
<dbReference type="GO" id="GO:0003899">
    <property type="term" value="F:DNA-directed RNA polymerase activity"/>
    <property type="evidence" value="ECO:0007669"/>
    <property type="project" value="UniProtKB-UniRule"/>
</dbReference>
<dbReference type="GO" id="GO:0032549">
    <property type="term" value="F:ribonucleoside binding"/>
    <property type="evidence" value="ECO:0007669"/>
    <property type="project" value="InterPro"/>
</dbReference>
<dbReference type="GO" id="GO:0006351">
    <property type="term" value="P:DNA-templated transcription"/>
    <property type="evidence" value="ECO:0007669"/>
    <property type="project" value="UniProtKB-UniRule"/>
</dbReference>
<dbReference type="CDD" id="cd00653">
    <property type="entry name" value="RNA_pol_B_RPB2"/>
    <property type="match status" value="1"/>
</dbReference>
<dbReference type="FunFam" id="3.90.1800.10:FF:000001">
    <property type="entry name" value="DNA-directed RNA polymerase subunit beta"/>
    <property type="match status" value="1"/>
</dbReference>
<dbReference type="Gene3D" id="2.40.50.100">
    <property type="match status" value="1"/>
</dbReference>
<dbReference type="Gene3D" id="2.40.50.150">
    <property type="match status" value="1"/>
</dbReference>
<dbReference type="Gene3D" id="3.90.1100.10">
    <property type="match status" value="1"/>
</dbReference>
<dbReference type="Gene3D" id="2.30.150.10">
    <property type="entry name" value="DNA-directed RNA polymerase, beta subunit, external 1 domain"/>
    <property type="match status" value="1"/>
</dbReference>
<dbReference type="Gene3D" id="2.40.270.10">
    <property type="entry name" value="DNA-directed RNA polymerase, subunit 2, domain 6"/>
    <property type="match status" value="1"/>
</dbReference>
<dbReference type="Gene3D" id="3.90.1800.10">
    <property type="entry name" value="RNA polymerase alpha subunit dimerisation domain"/>
    <property type="match status" value="1"/>
</dbReference>
<dbReference type="Gene3D" id="3.90.1110.10">
    <property type="entry name" value="RNA polymerase Rpb2, domain 2"/>
    <property type="match status" value="1"/>
</dbReference>
<dbReference type="HAMAP" id="MF_01321">
    <property type="entry name" value="RNApol_bact_RpoB"/>
    <property type="match status" value="1"/>
</dbReference>
<dbReference type="InterPro" id="IPR042107">
    <property type="entry name" value="DNA-dir_RNA_pol_bsu_ext_1_sf"/>
</dbReference>
<dbReference type="InterPro" id="IPR019462">
    <property type="entry name" value="DNA-dir_RNA_pol_bsu_external_1"/>
</dbReference>
<dbReference type="InterPro" id="IPR015712">
    <property type="entry name" value="DNA-dir_RNA_pol_su2"/>
</dbReference>
<dbReference type="InterPro" id="IPR007120">
    <property type="entry name" value="DNA-dir_RNAP_su2_dom"/>
</dbReference>
<dbReference type="InterPro" id="IPR037033">
    <property type="entry name" value="DNA-dir_RNAP_su2_hyb_sf"/>
</dbReference>
<dbReference type="InterPro" id="IPR010243">
    <property type="entry name" value="RNA_pol_bsu_bac"/>
</dbReference>
<dbReference type="InterPro" id="IPR007121">
    <property type="entry name" value="RNA_pol_bsu_CS"/>
</dbReference>
<dbReference type="InterPro" id="IPR007644">
    <property type="entry name" value="RNA_pol_bsu_protrusion"/>
</dbReference>
<dbReference type="InterPro" id="IPR007642">
    <property type="entry name" value="RNA_pol_Rpb2_2"/>
</dbReference>
<dbReference type="InterPro" id="IPR037034">
    <property type="entry name" value="RNA_pol_Rpb2_2_sf"/>
</dbReference>
<dbReference type="InterPro" id="IPR007645">
    <property type="entry name" value="RNA_pol_Rpb2_3"/>
</dbReference>
<dbReference type="InterPro" id="IPR007641">
    <property type="entry name" value="RNA_pol_Rpb2_7"/>
</dbReference>
<dbReference type="InterPro" id="IPR014724">
    <property type="entry name" value="RNA_pol_RPB2_OB-fold"/>
</dbReference>
<dbReference type="NCBIfam" id="NF001616">
    <property type="entry name" value="PRK00405.1"/>
    <property type="match status" value="1"/>
</dbReference>
<dbReference type="NCBIfam" id="TIGR02013">
    <property type="entry name" value="rpoB"/>
    <property type="match status" value="1"/>
</dbReference>
<dbReference type="PANTHER" id="PTHR20856">
    <property type="entry name" value="DNA-DIRECTED RNA POLYMERASE I SUBUNIT 2"/>
    <property type="match status" value="1"/>
</dbReference>
<dbReference type="Pfam" id="PF04563">
    <property type="entry name" value="RNA_pol_Rpb2_1"/>
    <property type="match status" value="1"/>
</dbReference>
<dbReference type="Pfam" id="PF04561">
    <property type="entry name" value="RNA_pol_Rpb2_2"/>
    <property type="match status" value="1"/>
</dbReference>
<dbReference type="Pfam" id="PF04565">
    <property type="entry name" value="RNA_pol_Rpb2_3"/>
    <property type="match status" value="1"/>
</dbReference>
<dbReference type="Pfam" id="PF10385">
    <property type="entry name" value="RNA_pol_Rpb2_45"/>
    <property type="match status" value="1"/>
</dbReference>
<dbReference type="Pfam" id="PF00562">
    <property type="entry name" value="RNA_pol_Rpb2_6"/>
    <property type="match status" value="1"/>
</dbReference>
<dbReference type="Pfam" id="PF04560">
    <property type="entry name" value="RNA_pol_Rpb2_7"/>
    <property type="match status" value="1"/>
</dbReference>
<dbReference type="SUPFAM" id="SSF64484">
    <property type="entry name" value="beta and beta-prime subunits of DNA dependent RNA-polymerase"/>
    <property type="match status" value="1"/>
</dbReference>
<dbReference type="PROSITE" id="PS01166">
    <property type="entry name" value="RNA_POL_BETA"/>
    <property type="match status" value="1"/>
</dbReference>
<feature type="chain" id="PRO_1000086366" description="DNA-directed RNA polymerase subunit beta">
    <location>
        <begin position="1"/>
        <end position="1236"/>
    </location>
</feature>
<feature type="region of interest" description="Disordered" evidence="2">
    <location>
        <begin position="1193"/>
        <end position="1212"/>
    </location>
</feature>
<feature type="compositionally biased region" description="Acidic residues" evidence="2">
    <location>
        <begin position="1194"/>
        <end position="1212"/>
    </location>
</feature>
<keyword id="KW-0240">DNA-directed RNA polymerase</keyword>
<keyword id="KW-0548">Nucleotidyltransferase</keyword>
<keyword id="KW-0804">Transcription</keyword>
<keyword id="KW-0808">Transferase</keyword>
<reference key="1">
    <citation type="submission" date="2007-06" db="EMBL/GenBank/DDBJ databases">
        <title>Complete sequence of Clostridium beijerinckii NCIMB 8052.</title>
        <authorList>
            <consortium name="US DOE Joint Genome Institute"/>
            <person name="Copeland A."/>
            <person name="Lucas S."/>
            <person name="Lapidus A."/>
            <person name="Barry K."/>
            <person name="Detter J.C."/>
            <person name="Glavina del Rio T."/>
            <person name="Hammon N."/>
            <person name="Israni S."/>
            <person name="Dalin E."/>
            <person name="Tice H."/>
            <person name="Pitluck S."/>
            <person name="Sims D."/>
            <person name="Brettin T."/>
            <person name="Bruce D."/>
            <person name="Tapia R."/>
            <person name="Brainard J."/>
            <person name="Schmutz J."/>
            <person name="Larimer F."/>
            <person name="Land M."/>
            <person name="Hauser L."/>
            <person name="Kyrpides N."/>
            <person name="Mikhailova N."/>
            <person name="Bennet G."/>
            <person name="Cann I."/>
            <person name="Chen J.-S."/>
            <person name="Contreras A.L."/>
            <person name="Jones D."/>
            <person name="Kashket E."/>
            <person name="Mitchell W."/>
            <person name="Stoddard S."/>
            <person name="Schwarz W."/>
            <person name="Qureshi N."/>
            <person name="Young M."/>
            <person name="Shi Z."/>
            <person name="Ezeji T."/>
            <person name="White B."/>
            <person name="Blaschek H."/>
            <person name="Richardson P."/>
        </authorList>
    </citation>
    <scope>NUCLEOTIDE SEQUENCE [LARGE SCALE GENOMIC DNA]</scope>
    <source>
        <strain>ATCC 51743 / NCIMB 8052</strain>
    </source>
</reference>
<accession>A6LPQ4</accession>
<sequence>MVHPVQVGKRTRMSFGKVNDVTEMPNLIEVQLDSYEWFLREGLHEVFDDINPITNFTGNLVLEFVDYKLDMENIKYSVEECKERDATYAAPLKVSIRLQNNETGEIKEQEVFMGDFPLMTEQGTFVINGAERVIVSQLVRSPGVYYNYSIDKSGKKLYSSTVIPNRGAWLEYETDSNDVIYVRIDKTRKLSISILARAMGLGSDQELLDFFGEEERFRASIEKDNTKTKEEALLEIYKRLRPGEPPTVDSAISLIDTLFFDAKRYDLSRVGRYKFNKKLALNLRIANQVAATDIVNPQTGEIMVEKGQKISRLVAEEIQNAGVKSVDVLIEDKVIRVISNNFVDLKKQVSFDISDLGIKELVHYPTLKEILDNFSDEASIKEEIKKNISKLIPKHIIRDDIFATISYELGLTYGIGYVDDIDHLGNRRLRSVGELLQNQFRIGLSRMERVVKERMTIQDQEAITPQMLINIRPVAAAIKEFFGSSQLSQFMDQTNPLSELTHKRRLSALGPGGLSRERAGFEVRDVHHSHYGRMCPIETPEGPNIGLINSLATFAKVNEYGFIETPYRIVDKENGRATDEIRYFTADEEDQCLIAEAKEPMDENGHFINKKVRVRHLEDILVVPTTDVDLIDVSARQIVSVATAMIPFLENDDASRALMGSNMQRQAVPLLSPQAPIVGTGIEFKAAVDSGVLPKAKNAGVVTYVSGSEIRVKRDSDGGTDVYKLLKFKRSNSGTCINQRPIVDTGEIVYKNQVIADGPSTDLGEIALGKNIRMGFITWEGYNYEDAMLISEELVREDVFTSMHIEEYECEARDTKLGPEEITRDIPNVSDDALKDVDDRGIIRIGAEVRSGDILVGKVTPKGETELTAEERLLRAIFGEKAREVRDTSLRVPHGEAGIIVDIKVFTRENGDELNPGVNELVRCYIAQKRKISVGDKMAGRHGNKGVISRILPEEDMPFLPDGRPLQICLNPLGVPSRMNIGQVLEVHLGWAASHLGWHIATPVFDGATQPEITECMIKAGFREDAKTILYDGRTGEPFDNPVTVGIMYILKLHHLVDDKIHARSTGPYSLVTQQPLGGKAQFGGQRFGEMEVWALEAYGAAHTLQEILTVKSDDVVGRVKTYEAIVKGENIPEPGVPESFKVLIKELQALCLDIKVLNDEHEEVTLKEFVDEDMANLEVNIEGTEEIMVPEPDVLDDDSYDQNNDEDIDEIDYDESVDIADLETELELDDFNDEH</sequence>
<organism>
    <name type="scientific">Clostridium beijerinckii (strain ATCC 51743 / NCIMB 8052)</name>
    <name type="common">Clostridium acetobutylicum</name>
    <dbReference type="NCBI Taxonomy" id="290402"/>
    <lineage>
        <taxon>Bacteria</taxon>
        <taxon>Bacillati</taxon>
        <taxon>Bacillota</taxon>
        <taxon>Clostridia</taxon>
        <taxon>Eubacteriales</taxon>
        <taxon>Clostridiaceae</taxon>
        <taxon>Clostridium</taxon>
    </lineage>
</organism>
<proteinExistence type="inferred from homology"/>
<gene>
    <name evidence="1" type="primary">rpoB</name>
    <name type="ordered locus">Cbei_0144</name>
</gene>
<name>RPOB_CLOB8</name>